<reference key="1">
    <citation type="journal article" date="2000" name="Nature">
        <title>Complete genome sequence of Pseudomonas aeruginosa PAO1, an opportunistic pathogen.</title>
        <authorList>
            <person name="Stover C.K."/>
            <person name="Pham X.-Q.T."/>
            <person name="Erwin A.L."/>
            <person name="Mizoguchi S.D."/>
            <person name="Warrener P."/>
            <person name="Hickey M.J."/>
            <person name="Brinkman F.S.L."/>
            <person name="Hufnagle W.O."/>
            <person name="Kowalik D.J."/>
            <person name="Lagrou M."/>
            <person name="Garber R.L."/>
            <person name="Goltry L."/>
            <person name="Tolentino E."/>
            <person name="Westbrock-Wadman S."/>
            <person name="Yuan Y."/>
            <person name="Brody L.L."/>
            <person name="Coulter S.N."/>
            <person name="Folger K.R."/>
            <person name="Kas A."/>
            <person name="Larbig K."/>
            <person name="Lim R.M."/>
            <person name="Smith K.A."/>
            <person name="Spencer D.H."/>
            <person name="Wong G.K.-S."/>
            <person name="Wu Z."/>
            <person name="Paulsen I.T."/>
            <person name="Reizer J."/>
            <person name="Saier M.H. Jr."/>
            <person name="Hancock R.E.W."/>
            <person name="Lory S."/>
            <person name="Olson M.V."/>
        </authorList>
    </citation>
    <scope>NUCLEOTIDE SEQUENCE [LARGE SCALE GENOMIC DNA]</scope>
    <source>
        <strain>ATCC 15692 / DSM 22644 / CIP 104116 / JCM 14847 / LMG 12228 / 1C / PRS 101 / PAO1</strain>
    </source>
</reference>
<sequence>MLSWAITFLIIAIIAAVLGFGGIAGAATGIAKILFVLFLVLFVVSFFFGRRRG</sequence>
<evidence type="ECO:0000255" key="1">
    <source>
        <dbReference type="HAMAP-Rule" id="MF_01361"/>
    </source>
</evidence>
<feature type="chain" id="PRO_0000256759" description="UPF0391 membrane protein PA5482">
    <location>
        <begin position="1"/>
        <end position="53"/>
    </location>
</feature>
<feature type="transmembrane region" description="Helical" evidence="1">
    <location>
        <begin position="4"/>
        <end position="24"/>
    </location>
</feature>
<feature type="transmembrane region" description="Helical" evidence="1">
    <location>
        <begin position="29"/>
        <end position="49"/>
    </location>
</feature>
<proteinExistence type="inferred from homology"/>
<keyword id="KW-1003">Cell membrane</keyword>
<keyword id="KW-0472">Membrane</keyword>
<keyword id="KW-1185">Reference proteome</keyword>
<keyword id="KW-0812">Transmembrane</keyword>
<keyword id="KW-1133">Transmembrane helix</keyword>
<dbReference type="EMBL" id="AE004091">
    <property type="protein sequence ID" value="AAG08867.1"/>
    <property type="molecule type" value="Genomic_DNA"/>
</dbReference>
<dbReference type="PIR" id="A82960">
    <property type="entry name" value="A82960"/>
</dbReference>
<dbReference type="RefSeq" id="NP_254169.1">
    <property type="nucleotide sequence ID" value="NC_002516.2"/>
</dbReference>
<dbReference type="RefSeq" id="WP_003096961.1">
    <property type="nucleotide sequence ID" value="NZ_QZGE01000012.1"/>
</dbReference>
<dbReference type="FunCoup" id="Q9HT88">
    <property type="interactions" value="7"/>
</dbReference>
<dbReference type="STRING" id="208964.PA5482"/>
<dbReference type="PaxDb" id="208964-PA5482"/>
<dbReference type="DNASU" id="877695"/>
<dbReference type="GeneID" id="877695"/>
<dbReference type="KEGG" id="pae:PA5482"/>
<dbReference type="PATRIC" id="fig|208964.12.peg.5747"/>
<dbReference type="PseudoCAP" id="PA5482"/>
<dbReference type="HOGENOM" id="CLU_187346_2_1_6"/>
<dbReference type="InParanoid" id="Q9HT88"/>
<dbReference type="BioCyc" id="PAER208964:G1FZ6-5609-MONOMER"/>
<dbReference type="Proteomes" id="UP000002438">
    <property type="component" value="Chromosome"/>
</dbReference>
<dbReference type="GO" id="GO:0005886">
    <property type="term" value="C:plasma membrane"/>
    <property type="evidence" value="ECO:0007669"/>
    <property type="project" value="UniProtKB-SubCell"/>
</dbReference>
<dbReference type="HAMAP" id="MF_01361">
    <property type="entry name" value="UPF0391"/>
    <property type="match status" value="1"/>
</dbReference>
<dbReference type="InterPro" id="IPR009760">
    <property type="entry name" value="DUF1328"/>
</dbReference>
<dbReference type="NCBIfam" id="NF010226">
    <property type="entry name" value="PRK13682.1-1"/>
    <property type="match status" value="1"/>
</dbReference>
<dbReference type="NCBIfam" id="NF010228">
    <property type="entry name" value="PRK13682.1-3"/>
    <property type="match status" value="1"/>
</dbReference>
<dbReference type="NCBIfam" id="NF010229">
    <property type="entry name" value="PRK13682.1-4"/>
    <property type="match status" value="1"/>
</dbReference>
<dbReference type="Pfam" id="PF07043">
    <property type="entry name" value="DUF1328"/>
    <property type="match status" value="1"/>
</dbReference>
<dbReference type="PIRSF" id="PIRSF036466">
    <property type="entry name" value="UCP036466"/>
    <property type="match status" value="1"/>
</dbReference>
<comment type="subcellular location">
    <subcellularLocation>
        <location evidence="1">Cell membrane</location>
        <topology evidence="1">Multi-pass membrane protein</topology>
    </subcellularLocation>
</comment>
<comment type="similarity">
    <text evidence="1">Belongs to the UPF0391 family.</text>
</comment>
<organism>
    <name type="scientific">Pseudomonas aeruginosa (strain ATCC 15692 / DSM 22644 / CIP 104116 / JCM 14847 / LMG 12228 / 1C / PRS 101 / PAO1)</name>
    <dbReference type="NCBI Taxonomy" id="208964"/>
    <lineage>
        <taxon>Bacteria</taxon>
        <taxon>Pseudomonadati</taxon>
        <taxon>Pseudomonadota</taxon>
        <taxon>Gammaproteobacteria</taxon>
        <taxon>Pseudomonadales</taxon>
        <taxon>Pseudomonadaceae</taxon>
        <taxon>Pseudomonas</taxon>
    </lineage>
</organism>
<gene>
    <name type="ordered locus">PA5482</name>
</gene>
<name>Y5482_PSEAE</name>
<accession>Q9HT88</accession>
<protein>
    <recommendedName>
        <fullName evidence="1">UPF0391 membrane protein PA5482</fullName>
    </recommendedName>
</protein>